<dbReference type="EMBL" id="AB078905">
    <property type="protein sequence ID" value="BAC55946.1"/>
    <property type="molecule type" value="mRNA"/>
</dbReference>
<dbReference type="SMR" id="Q805F5"/>
<dbReference type="GO" id="GO:0005576">
    <property type="term" value="C:extracellular region"/>
    <property type="evidence" value="ECO:0007669"/>
    <property type="project" value="UniProtKB-SubCell"/>
</dbReference>
<dbReference type="GO" id="GO:0005886">
    <property type="term" value="C:plasma membrane"/>
    <property type="evidence" value="ECO:0007669"/>
    <property type="project" value="TreeGrafter"/>
</dbReference>
<dbReference type="GO" id="GO:0090729">
    <property type="term" value="F:toxin activity"/>
    <property type="evidence" value="ECO:0007669"/>
    <property type="project" value="UniProtKB-KW"/>
</dbReference>
<dbReference type="FunFam" id="4.10.70.10:FF:000005">
    <property type="entry name" value="Zinc metalloproteinase/disintegrin"/>
    <property type="match status" value="1"/>
</dbReference>
<dbReference type="Gene3D" id="4.10.70.10">
    <property type="entry name" value="Disintegrin domain"/>
    <property type="match status" value="1"/>
</dbReference>
<dbReference type="InterPro" id="IPR018358">
    <property type="entry name" value="Disintegrin_CS"/>
</dbReference>
<dbReference type="InterPro" id="IPR001762">
    <property type="entry name" value="Disintegrin_dom"/>
</dbReference>
<dbReference type="InterPro" id="IPR036436">
    <property type="entry name" value="Disintegrin_dom_sf"/>
</dbReference>
<dbReference type="PANTHER" id="PTHR11905">
    <property type="entry name" value="ADAM A DISINTEGRIN AND METALLOPROTEASE DOMAIN"/>
    <property type="match status" value="1"/>
</dbReference>
<dbReference type="PANTHER" id="PTHR11905:SF32">
    <property type="entry name" value="DISINTEGRIN AND METALLOPROTEINASE DOMAIN-CONTAINING PROTEIN 28"/>
    <property type="match status" value="1"/>
</dbReference>
<dbReference type="Pfam" id="PF00200">
    <property type="entry name" value="Disintegrin"/>
    <property type="match status" value="1"/>
</dbReference>
<dbReference type="PRINTS" id="PR00289">
    <property type="entry name" value="DISINTEGRIN"/>
</dbReference>
<dbReference type="SMART" id="SM00050">
    <property type="entry name" value="DISIN"/>
    <property type="match status" value="1"/>
</dbReference>
<dbReference type="SUPFAM" id="SSF57552">
    <property type="entry name" value="Blood coagulation inhibitor (disintegrin)"/>
    <property type="match status" value="1"/>
</dbReference>
<dbReference type="PROSITE" id="PS00427">
    <property type="entry name" value="DISINTEGRIN_1"/>
    <property type="match status" value="1"/>
</dbReference>
<dbReference type="PROSITE" id="PS50214">
    <property type="entry name" value="DISINTEGRIN_2"/>
    <property type="match status" value="1"/>
</dbReference>
<name>DIDA_AGKPI</name>
<keyword id="KW-1217">Cell adhesion impairing toxin</keyword>
<keyword id="KW-0903">Direct protein sequencing</keyword>
<keyword id="KW-1015">Disulfide bond</keyword>
<keyword id="KW-1199">Hemostasis impairing toxin</keyword>
<keyword id="KW-1201">Platelet aggregation inhibiting toxin</keyword>
<keyword id="KW-0964">Secreted</keyword>
<keyword id="KW-0732">Signal</keyword>
<keyword id="KW-0800">Toxin</keyword>
<proteinExistence type="evidence at protein level"/>
<feature type="signal peptide" evidence="2">
    <location>
        <begin position="1"/>
        <end position="20"/>
    </location>
</feature>
<feature type="propeptide" id="PRO_0000007239" evidence="2">
    <location>
        <begin position="21"/>
        <end position="44"/>
    </location>
</feature>
<feature type="chain" id="PRO_0000007240" description="Disintegrin piscivostatin-alpha">
    <location>
        <begin position="45"/>
        <end position="109"/>
    </location>
</feature>
<feature type="propeptide" id="PRO_0000007241">
    <location>
        <begin position="110"/>
        <end position="111"/>
    </location>
</feature>
<feature type="domain" description="Disintegrin" evidence="3">
    <location>
        <begin position="45"/>
        <end position="111"/>
    </location>
</feature>
<feature type="short sequence motif" description="Cell attachment site">
    <location>
        <begin position="89"/>
        <end position="91"/>
    </location>
</feature>
<feature type="disulfide bond" evidence="1 3">
    <location>
        <begin position="53"/>
        <end position="76"/>
    </location>
</feature>
<feature type="disulfide bond" description="Interchain (with C-426 in subunit beta)" evidence="3">
    <location>
        <position position="54"/>
    </location>
</feature>
<feature type="disulfide bond" description="Interchain (with C-431 in subunit beta)" evidence="3">
    <location>
        <position position="59"/>
    </location>
</feature>
<feature type="disulfide bond" evidence="1 3">
    <location>
        <begin position="67"/>
        <end position="73"/>
    </location>
</feature>
<feature type="disulfide bond" evidence="1 3">
    <location>
        <begin position="72"/>
        <end position="97"/>
    </location>
</feature>
<feature type="disulfide bond" evidence="1 3">
    <location>
        <begin position="85"/>
        <end position="104"/>
    </location>
</feature>
<evidence type="ECO:0000250" key="1">
    <source>
        <dbReference type="UniProtKB" id="P81742"/>
    </source>
</evidence>
<evidence type="ECO:0000255" key="2"/>
<evidence type="ECO:0000255" key="3">
    <source>
        <dbReference type="PROSITE-ProRule" id="PRU00068"/>
    </source>
</evidence>
<evidence type="ECO:0000269" key="4">
    <source>
    </source>
</evidence>
<evidence type="ECO:0000269" key="5">
    <source>
    </source>
</evidence>
<evidence type="ECO:0000305" key="6"/>
<evidence type="ECO:0000312" key="7">
    <source>
        <dbReference type="EMBL" id="BAC55946.1"/>
    </source>
</evidence>
<protein>
    <recommendedName>
        <fullName>Disintegrin piscivostatin-alpha</fullName>
        <shortName>PVS-alpha</shortName>
    </recommendedName>
</protein>
<comment type="function">
    <text>Inhibits fibrinogen interaction with platelets. Acts by binding to alpha-IIb/beta-3 (ITGA2B/ITGB3) on the platelet surface and inhibits both ADP-induced platelet aggregation and platelet aggregate dissociation in human platelet-rich plasma.</text>
</comment>
<comment type="subunit">
    <text evidence="5">Heterodimer with piscivostatin-beta; disulfide-linked.</text>
</comment>
<comment type="subcellular location">
    <subcellularLocation>
        <location>Secreted</location>
    </subcellularLocation>
</comment>
<comment type="tissue specificity">
    <text>Expressed by the venom gland.</text>
</comment>
<comment type="similarity">
    <text evidence="6">Belongs to the disintegrin family. Dimeric disintegrin subfamily.</text>
</comment>
<accession>Q805F5</accession>
<reference evidence="6" key="1">
    <citation type="journal article" date="2002" name="Biochemistry">
        <title>A new gene structure of the disintegrin family: a subunit of dimeric disintegrin has a short coding region.</title>
        <authorList>
            <person name="Okuda D."/>
            <person name="Koike H."/>
            <person name="Morita T."/>
        </authorList>
    </citation>
    <scope>NUCLEOTIDE SEQUENCE [MRNA]</scope>
    <scope>SUBUNIT</scope>
    <source>
        <tissue evidence="5">Venom</tissue>
    </source>
</reference>
<reference evidence="6" key="2">
    <citation type="journal article" date="2001" name="J. Biochem.">
        <title>Purification and characterization of a new RGD/KGD-containing dimeric disintegrin, piscivostatin, from the venom of Agkistrodon piscivorus piscivorus: the unique effect of piscivostatin on platelet aggregation.</title>
        <authorList>
            <person name="Okuda D."/>
            <person name="Morita T."/>
        </authorList>
    </citation>
    <scope>PROTEIN SEQUENCE OF 45-109</scope>
    <scope>CHARACTERIZATION</scope>
    <source>
        <tissue evidence="4">Venom</tissue>
    </source>
</reference>
<reference key="3">
    <citation type="journal article" date="2002" name="Acta Crystallogr. D">
        <title>Crystallization and preliminary crystallographic studies of dimeric disintegrins from the venom of two Agkistrodon snakes.</title>
        <authorList>
            <person name="Fujii Y."/>
            <person name="Okuda D."/>
            <person name="Fujimoto Z."/>
            <person name="Morita T."/>
            <person name="Mizuno H."/>
        </authorList>
    </citation>
    <scope>CRYSTALLIZATION</scope>
    <source>
        <tissue>Venom</tissue>
    </source>
</reference>
<organism evidence="7">
    <name type="scientific">Agkistrodon piscivorus piscivorus</name>
    <name type="common">Eastern cottonmouth</name>
    <dbReference type="NCBI Taxonomy" id="8716"/>
    <lineage>
        <taxon>Eukaryota</taxon>
        <taxon>Metazoa</taxon>
        <taxon>Chordata</taxon>
        <taxon>Craniata</taxon>
        <taxon>Vertebrata</taxon>
        <taxon>Euteleostomi</taxon>
        <taxon>Lepidosauria</taxon>
        <taxon>Squamata</taxon>
        <taxon>Bifurcata</taxon>
        <taxon>Unidentata</taxon>
        <taxon>Episquamata</taxon>
        <taxon>Toxicofera</taxon>
        <taxon>Serpentes</taxon>
        <taxon>Colubroidea</taxon>
        <taxon>Viperidae</taxon>
        <taxon>Crotalinae</taxon>
        <taxon>Agkistrodon</taxon>
    </lineage>
</organism>
<sequence>MIQVLLVTICLAVFPYQGSSIILESGNVNDYEVVYPRKITPLPKGAVQPKNPCCDAATCKLTPGSQCAEGLCCDQCKFIKAGKICRRARGDNPDYRCTGQSGDCPRKHFYA</sequence>